<sequence>MARQYPLEKFRNFGIMAHIDAGKTTTTERILFYTGRNHKIGETHDGASTMDWMAQEQERGITITSAATTCFWKGYELNIIDTPGHVDFTVEVERSLRVLDGAVTVLDAKSGVEPQTETVWRQADKYGVPRMIYVNKMDATGADYYNCINTVRERLQANAVAIQIPIGQEDQFQGMVDLLTNQAIIFKDDLGKDIEVSDVPADLADKAEEYRAAMIEAIAETDEELMMKYLEGEELTLEELKVALRKATINNEIIPVICGSSYKNKGVQQMIDGVVDYLPSPLDIPAVKGTNLDGEEEVREASDDAPMSALAFKIATDPFVGRLAFTRVYSGVLESGSYVLNSTKGKKERIGRLVKMHANSREEVESLEAAELGAVIGLKNTTTGDTLCTEAAPIILEKMEFPEPVISIAIEPKTKAGQEKMGIALSKLAEEDPTFKTWTDQETGQTIIAGMGELHLDIIVDRLQREFKVECNVGAPQVAYKETIKKAVEAEAKFARQSGGRGQYGHCKIEMIPTEGEYEFENAIVGGAIPREYIPAVDNGIREAAESGIIAGYPVINFKIRLFDGSYHDVDSSEMAFKIAGSMAFKNAMAKADAVLLEPIMKVEITVPEEYMGDVIGDVNSRRGRMEGMDSRNGAQIIRAFIPLSEMFGYATALRSRTQGRGTYAMEFDHYDDVPKSIQEEVAGKKNK</sequence>
<accession>Q0TMP3</accession>
<evidence type="ECO:0000255" key="1">
    <source>
        <dbReference type="HAMAP-Rule" id="MF_00054"/>
    </source>
</evidence>
<dbReference type="EMBL" id="CP000246">
    <property type="protein sequence ID" value="ABG84054.1"/>
    <property type="molecule type" value="Genomic_DNA"/>
</dbReference>
<dbReference type="RefSeq" id="WP_003460612.1">
    <property type="nucleotide sequence ID" value="NC_008261.1"/>
</dbReference>
<dbReference type="SMR" id="Q0TMP3"/>
<dbReference type="STRING" id="195103.CPF_2717"/>
<dbReference type="PaxDb" id="195103-CPF_2717"/>
<dbReference type="GeneID" id="93001006"/>
<dbReference type="KEGG" id="cpf:CPF_2717"/>
<dbReference type="eggNOG" id="COG0480">
    <property type="taxonomic scope" value="Bacteria"/>
</dbReference>
<dbReference type="HOGENOM" id="CLU_002794_4_1_9"/>
<dbReference type="Proteomes" id="UP000001823">
    <property type="component" value="Chromosome"/>
</dbReference>
<dbReference type="GO" id="GO:0005737">
    <property type="term" value="C:cytoplasm"/>
    <property type="evidence" value="ECO:0007669"/>
    <property type="project" value="UniProtKB-SubCell"/>
</dbReference>
<dbReference type="GO" id="GO:0005525">
    <property type="term" value="F:GTP binding"/>
    <property type="evidence" value="ECO:0007669"/>
    <property type="project" value="UniProtKB-UniRule"/>
</dbReference>
<dbReference type="GO" id="GO:0003924">
    <property type="term" value="F:GTPase activity"/>
    <property type="evidence" value="ECO:0007669"/>
    <property type="project" value="InterPro"/>
</dbReference>
<dbReference type="GO" id="GO:0003746">
    <property type="term" value="F:translation elongation factor activity"/>
    <property type="evidence" value="ECO:0007669"/>
    <property type="project" value="UniProtKB-UniRule"/>
</dbReference>
<dbReference type="GO" id="GO:0032790">
    <property type="term" value="P:ribosome disassembly"/>
    <property type="evidence" value="ECO:0007669"/>
    <property type="project" value="TreeGrafter"/>
</dbReference>
<dbReference type="CDD" id="cd01886">
    <property type="entry name" value="EF-G"/>
    <property type="match status" value="1"/>
</dbReference>
<dbReference type="CDD" id="cd16262">
    <property type="entry name" value="EFG_III"/>
    <property type="match status" value="1"/>
</dbReference>
<dbReference type="CDD" id="cd01434">
    <property type="entry name" value="EFG_mtEFG1_IV"/>
    <property type="match status" value="1"/>
</dbReference>
<dbReference type="CDD" id="cd03713">
    <property type="entry name" value="EFG_mtEFG_C"/>
    <property type="match status" value="1"/>
</dbReference>
<dbReference type="CDD" id="cd04088">
    <property type="entry name" value="EFG_mtEFG_II"/>
    <property type="match status" value="1"/>
</dbReference>
<dbReference type="FunFam" id="2.40.30.10:FF:000006">
    <property type="entry name" value="Elongation factor G"/>
    <property type="match status" value="1"/>
</dbReference>
<dbReference type="FunFam" id="3.30.230.10:FF:000003">
    <property type="entry name" value="Elongation factor G"/>
    <property type="match status" value="1"/>
</dbReference>
<dbReference type="FunFam" id="3.30.70.240:FF:000001">
    <property type="entry name" value="Elongation factor G"/>
    <property type="match status" value="1"/>
</dbReference>
<dbReference type="FunFam" id="3.30.70.870:FF:000001">
    <property type="entry name" value="Elongation factor G"/>
    <property type="match status" value="1"/>
</dbReference>
<dbReference type="FunFam" id="3.40.50.300:FF:000029">
    <property type="entry name" value="Elongation factor G"/>
    <property type="match status" value="1"/>
</dbReference>
<dbReference type="Gene3D" id="3.30.230.10">
    <property type="match status" value="1"/>
</dbReference>
<dbReference type="Gene3D" id="3.30.70.240">
    <property type="match status" value="1"/>
</dbReference>
<dbReference type="Gene3D" id="3.30.70.870">
    <property type="entry name" value="Elongation Factor G (Translational Gtpase), domain 3"/>
    <property type="match status" value="1"/>
</dbReference>
<dbReference type="Gene3D" id="3.40.50.300">
    <property type="entry name" value="P-loop containing nucleotide triphosphate hydrolases"/>
    <property type="match status" value="1"/>
</dbReference>
<dbReference type="Gene3D" id="2.40.30.10">
    <property type="entry name" value="Translation factors"/>
    <property type="match status" value="1"/>
</dbReference>
<dbReference type="HAMAP" id="MF_00054_B">
    <property type="entry name" value="EF_G_EF_2_B"/>
    <property type="match status" value="1"/>
</dbReference>
<dbReference type="InterPro" id="IPR053905">
    <property type="entry name" value="EF-G-like_DII"/>
</dbReference>
<dbReference type="InterPro" id="IPR041095">
    <property type="entry name" value="EFG_II"/>
</dbReference>
<dbReference type="InterPro" id="IPR009022">
    <property type="entry name" value="EFG_III"/>
</dbReference>
<dbReference type="InterPro" id="IPR035647">
    <property type="entry name" value="EFG_III/V"/>
</dbReference>
<dbReference type="InterPro" id="IPR047872">
    <property type="entry name" value="EFG_IV"/>
</dbReference>
<dbReference type="InterPro" id="IPR035649">
    <property type="entry name" value="EFG_V"/>
</dbReference>
<dbReference type="InterPro" id="IPR000640">
    <property type="entry name" value="EFG_V-like"/>
</dbReference>
<dbReference type="InterPro" id="IPR031157">
    <property type="entry name" value="G_TR_CS"/>
</dbReference>
<dbReference type="InterPro" id="IPR027417">
    <property type="entry name" value="P-loop_NTPase"/>
</dbReference>
<dbReference type="InterPro" id="IPR020568">
    <property type="entry name" value="Ribosomal_Su5_D2-typ_SF"/>
</dbReference>
<dbReference type="InterPro" id="IPR014721">
    <property type="entry name" value="Ribsml_uS5_D2-typ_fold_subgr"/>
</dbReference>
<dbReference type="InterPro" id="IPR005225">
    <property type="entry name" value="Small_GTP-bd"/>
</dbReference>
<dbReference type="InterPro" id="IPR000795">
    <property type="entry name" value="T_Tr_GTP-bd_dom"/>
</dbReference>
<dbReference type="InterPro" id="IPR009000">
    <property type="entry name" value="Transl_B-barrel_sf"/>
</dbReference>
<dbReference type="InterPro" id="IPR004540">
    <property type="entry name" value="Transl_elong_EFG/EF2"/>
</dbReference>
<dbReference type="InterPro" id="IPR005517">
    <property type="entry name" value="Transl_elong_EFG/EF2_IV"/>
</dbReference>
<dbReference type="NCBIfam" id="TIGR00484">
    <property type="entry name" value="EF-G"/>
    <property type="match status" value="1"/>
</dbReference>
<dbReference type="NCBIfam" id="NF009379">
    <property type="entry name" value="PRK12740.1-3"/>
    <property type="match status" value="1"/>
</dbReference>
<dbReference type="NCBIfam" id="NF009381">
    <property type="entry name" value="PRK12740.1-5"/>
    <property type="match status" value="1"/>
</dbReference>
<dbReference type="NCBIfam" id="TIGR00231">
    <property type="entry name" value="small_GTP"/>
    <property type="match status" value="1"/>
</dbReference>
<dbReference type="PANTHER" id="PTHR43261:SF1">
    <property type="entry name" value="RIBOSOME-RELEASING FACTOR 2, MITOCHONDRIAL"/>
    <property type="match status" value="1"/>
</dbReference>
<dbReference type="PANTHER" id="PTHR43261">
    <property type="entry name" value="TRANSLATION ELONGATION FACTOR G-RELATED"/>
    <property type="match status" value="1"/>
</dbReference>
<dbReference type="Pfam" id="PF22042">
    <property type="entry name" value="EF-G_D2"/>
    <property type="match status" value="1"/>
</dbReference>
<dbReference type="Pfam" id="PF00679">
    <property type="entry name" value="EFG_C"/>
    <property type="match status" value="1"/>
</dbReference>
<dbReference type="Pfam" id="PF14492">
    <property type="entry name" value="EFG_III"/>
    <property type="match status" value="1"/>
</dbReference>
<dbReference type="Pfam" id="PF03764">
    <property type="entry name" value="EFG_IV"/>
    <property type="match status" value="1"/>
</dbReference>
<dbReference type="Pfam" id="PF00009">
    <property type="entry name" value="GTP_EFTU"/>
    <property type="match status" value="1"/>
</dbReference>
<dbReference type="PRINTS" id="PR00315">
    <property type="entry name" value="ELONGATNFCT"/>
</dbReference>
<dbReference type="SMART" id="SM00838">
    <property type="entry name" value="EFG_C"/>
    <property type="match status" value="1"/>
</dbReference>
<dbReference type="SMART" id="SM00889">
    <property type="entry name" value="EFG_IV"/>
    <property type="match status" value="1"/>
</dbReference>
<dbReference type="SUPFAM" id="SSF54980">
    <property type="entry name" value="EF-G C-terminal domain-like"/>
    <property type="match status" value="2"/>
</dbReference>
<dbReference type="SUPFAM" id="SSF52540">
    <property type="entry name" value="P-loop containing nucleoside triphosphate hydrolases"/>
    <property type="match status" value="1"/>
</dbReference>
<dbReference type="SUPFAM" id="SSF54211">
    <property type="entry name" value="Ribosomal protein S5 domain 2-like"/>
    <property type="match status" value="1"/>
</dbReference>
<dbReference type="SUPFAM" id="SSF50447">
    <property type="entry name" value="Translation proteins"/>
    <property type="match status" value="1"/>
</dbReference>
<dbReference type="PROSITE" id="PS00301">
    <property type="entry name" value="G_TR_1"/>
    <property type="match status" value="1"/>
</dbReference>
<dbReference type="PROSITE" id="PS51722">
    <property type="entry name" value="G_TR_2"/>
    <property type="match status" value="1"/>
</dbReference>
<gene>
    <name evidence="1" type="primary">fusA</name>
    <name type="ordered locus">CPF_2717</name>
</gene>
<organism>
    <name type="scientific">Clostridium perfringens (strain ATCC 13124 / DSM 756 / JCM 1290 / NCIMB 6125 / NCTC 8237 / Type A)</name>
    <dbReference type="NCBI Taxonomy" id="195103"/>
    <lineage>
        <taxon>Bacteria</taxon>
        <taxon>Bacillati</taxon>
        <taxon>Bacillota</taxon>
        <taxon>Clostridia</taxon>
        <taxon>Eubacteriales</taxon>
        <taxon>Clostridiaceae</taxon>
        <taxon>Clostridium</taxon>
    </lineage>
</organism>
<feature type="chain" id="PRO_0000263442" description="Elongation factor G">
    <location>
        <begin position="1"/>
        <end position="688"/>
    </location>
</feature>
<feature type="domain" description="tr-type G">
    <location>
        <begin position="8"/>
        <end position="282"/>
    </location>
</feature>
<feature type="binding site" evidence="1">
    <location>
        <begin position="17"/>
        <end position="24"/>
    </location>
    <ligand>
        <name>GTP</name>
        <dbReference type="ChEBI" id="CHEBI:37565"/>
    </ligand>
</feature>
<feature type="binding site" evidence="1">
    <location>
        <begin position="81"/>
        <end position="85"/>
    </location>
    <ligand>
        <name>GTP</name>
        <dbReference type="ChEBI" id="CHEBI:37565"/>
    </ligand>
</feature>
<feature type="binding site" evidence="1">
    <location>
        <begin position="135"/>
        <end position="138"/>
    </location>
    <ligand>
        <name>GTP</name>
        <dbReference type="ChEBI" id="CHEBI:37565"/>
    </ligand>
</feature>
<comment type="function">
    <text evidence="1">Catalyzes the GTP-dependent ribosomal translocation step during translation elongation. During this step, the ribosome changes from the pre-translocational (PRE) to the post-translocational (POST) state as the newly formed A-site-bound peptidyl-tRNA and P-site-bound deacylated tRNA move to the P and E sites, respectively. Catalyzes the coordinated movement of the two tRNA molecules, the mRNA and conformational changes in the ribosome.</text>
</comment>
<comment type="subcellular location">
    <subcellularLocation>
        <location evidence="1">Cytoplasm</location>
    </subcellularLocation>
</comment>
<comment type="similarity">
    <text evidence="1">Belongs to the TRAFAC class translation factor GTPase superfamily. Classic translation factor GTPase family. EF-G/EF-2 subfamily.</text>
</comment>
<reference key="1">
    <citation type="journal article" date="2006" name="Genome Res.">
        <title>Skewed genomic variability in strains of the toxigenic bacterial pathogen, Clostridium perfringens.</title>
        <authorList>
            <person name="Myers G.S.A."/>
            <person name="Rasko D.A."/>
            <person name="Cheung J.K."/>
            <person name="Ravel J."/>
            <person name="Seshadri R."/>
            <person name="DeBoy R.T."/>
            <person name="Ren Q."/>
            <person name="Varga J."/>
            <person name="Awad M.M."/>
            <person name="Brinkac L.M."/>
            <person name="Daugherty S.C."/>
            <person name="Haft D.H."/>
            <person name="Dodson R.J."/>
            <person name="Madupu R."/>
            <person name="Nelson W.C."/>
            <person name="Rosovitz M.J."/>
            <person name="Sullivan S.A."/>
            <person name="Khouri H."/>
            <person name="Dimitrov G.I."/>
            <person name="Watkins K.L."/>
            <person name="Mulligan S."/>
            <person name="Benton J."/>
            <person name="Radune D."/>
            <person name="Fisher D.J."/>
            <person name="Atkins H.S."/>
            <person name="Hiscox T."/>
            <person name="Jost B.H."/>
            <person name="Billington S.J."/>
            <person name="Songer J.G."/>
            <person name="McClane B.A."/>
            <person name="Titball R.W."/>
            <person name="Rood J.I."/>
            <person name="Melville S.B."/>
            <person name="Paulsen I.T."/>
        </authorList>
    </citation>
    <scope>NUCLEOTIDE SEQUENCE [LARGE SCALE GENOMIC DNA]</scope>
    <source>
        <strain>ATCC 13124 / DSM 756 / JCM 1290 / NCIMB 6125 / NCTC 8237 / S 107 / Type A</strain>
    </source>
</reference>
<protein>
    <recommendedName>
        <fullName evidence="1">Elongation factor G</fullName>
        <shortName evidence="1">EF-G</shortName>
    </recommendedName>
</protein>
<proteinExistence type="inferred from homology"/>
<name>EFG_CLOP1</name>
<keyword id="KW-0963">Cytoplasm</keyword>
<keyword id="KW-0251">Elongation factor</keyword>
<keyword id="KW-0342">GTP-binding</keyword>
<keyword id="KW-0547">Nucleotide-binding</keyword>
<keyword id="KW-0648">Protein biosynthesis</keyword>